<gene>
    <name evidence="1" type="primary">nqrD</name>
    <name type="synonym">nqr4</name>
    <name type="ordered locus">CPn_0429</name>
    <name type="ordered locus">CP_0324</name>
    <name type="ordered locus">CpB0445</name>
</gene>
<keyword id="KW-0997">Cell inner membrane</keyword>
<keyword id="KW-1003">Cell membrane</keyword>
<keyword id="KW-0406">Ion transport</keyword>
<keyword id="KW-0472">Membrane</keyword>
<keyword id="KW-0520">NAD</keyword>
<keyword id="KW-0915">Sodium</keyword>
<keyword id="KW-0739">Sodium transport</keyword>
<keyword id="KW-1278">Translocase</keyword>
<keyword id="KW-0812">Transmembrane</keyword>
<keyword id="KW-1133">Transmembrane helix</keyword>
<keyword id="KW-0813">Transport</keyword>
<keyword id="KW-0830">Ubiquinone</keyword>
<feature type="chain" id="PRO_0000214231" description="Na(+)-translocating NADH-quinone reductase subunit D">
    <location>
        <begin position="1"/>
        <end position="213"/>
    </location>
</feature>
<feature type="transmembrane region" description="Helical" evidence="1">
    <location>
        <begin position="21"/>
        <end position="41"/>
    </location>
</feature>
<feature type="transmembrane region" description="Helical" evidence="1">
    <location>
        <begin position="42"/>
        <end position="62"/>
    </location>
</feature>
<feature type="transmembrane region" description="Helical" evidence="1">
    <location>
        <begin position="77"/>
        <end position="97"/>
    </location>
</feature>
<feature type="transmembrane region" description="Helical" evidence="1">
    <location>
        <begin position="101"/>
        <end position="121"/>
    </location>
</feature>
<feature type="transmembrane region" description="Helical" evidence="1">
    <location>
        <begin position="131"/>
        <end position="151"/>
    </location>
</feature>
<feature type="transmembrane region" description="Helical" evidence="1">
    <location>
        <begin position="153"/>
        <end position="173"/>
    </location>
</feature>
<feature type="transmembrane region" description="Helical" evidence="1">
    <location>
        <begin position="183"/>
        <end position="203"/>
    </location>
</feature>
<accession>Q9Z8B4</accession>
<organism>
    <name type="scientific">Chlamydia pneumoniae</name>
    <name type="common">Chlamydophila pneumoniae</name>
    <dbReference type="NCBI Taxonomy" id="83558"/>
    <lineage>
        <taxon>Bacteria</taxon>
        <taxon>Pseudomonadati</taxon>
        <taxon>Chlamydiota</taxon>
        <taxon>Chlamydiia</taxon>
        <taxon>Chlamydiales</taxon>
        <taxon>Chlamydiaceae</taxon>
        <taxon>Chlamydia/Chlamydophila group</taxon>
        <taxon>Chlamydia</taxon>
    </lineage>
</organism>
<proteinExistence type="inferred from homology"/>
<protein>
    <recommendedName>
        <fullName evidence="1">Na(+)-translocating NADH-quinone reductase subunit D</fullName>
        <shortName evidence="1">Na(+)-NQR subunit D</shortName>
        <shortName evidence="1">Na(+)-translocating NQR subunit D</shortName>
        <ecNumber evidence="1">7.2.1.1</ecNumber>
    </recommendedName>
    <alternativeName>
        <fullName evidence="1">NQR complex subunit D</fullName>
    </alternativeName>
    <alternativeName>
        <fullName evidence="1">NQR-1 subunit D</fullName>
    </alternativeName>
</protein>
<evidence type="ECO:0000255" key="1">
    <source>
        <dbReference type="HAMAP-Rule" id="MF_00428"/>
    </source>
</evidence>
<name>NQRD_CHLPN</name>
<sequence>MTSKKSYKSYFFDPLWSNNQILIAILGICSALAVTTTVQTAITMGIAVSIVTGCSSFFVSLLRKFTPDSVRMITQLIIISLFVIVIDQFLKAFFFDISKTLSVFVGLIITNCIVMGRSESLARHVTPIPAFLDGFASGLGYGWVLLVIGVIRELFGFGTLMGFRIIPQFVYASETHPDGYQNLSLMVLAPSAFFLLGIMIWLVNIRDSKKRKR</sequence>
<comment type="function">
    <text evidence="1">NQR complex catalyzes the reduction of ubiquinone-1 to ubiquinol by two successive reactions, coupled with the transport of Na(+) ions from the cytoplasm to the periplasm. NqrA to NqrE are probably involved in the second step, the conversion of ubisemiquinone to ubiquinol.</text>
</comment>
<comment type="catalytic activity">
    <reaction evidence="1">
        <text>a ubiquinone + n Na(+)(in) + NADH + H(+) = a ubiquinol + n Na(+)(out) + NAD(+)</text>
        <dbReference type="Rhea" id="RHEA:47748"/>
        <dbReference type="Rhea" id="RHEA-COMP:9565"/>
        <dbReference type="Rhea" id="RHEA-COMP:9566"/>
        <dbReference type="ChEBI" id="CHEBI:15378"/>
        <dbReference type="ChEBI" id="CHEBI:16389"/>
        <dbReference type="ChEBI" id="CHEBI:17976"/>
        <dbReference type="ChEBI" id="CHEBI:29101"/>
        <dbReference type="ChEBI" id="CHEBI:57540"/>
        <dbReference type="ChEBI" id="CHEBI:57945"/>
        <dbReference type="EC" id="7.2.1.1"/>
    </reaction>
</comment>
<comment type="subunit">
    <text evidence="1">Composed of six subunits; NqrA, NqrB, NqrC, NqrD, NqrE and NqrF.</text>
</comment>
<comment type="subcellular location">
    <subcellularLocation>
        <location evidence="1">Cell inner membrane</location>
        <topology evidence="1">Multi-pass membrane protein</topology>
    </subcellularLocation>
</comment>
<comment type="similarity">
    <text evidence="1">Belongs to the NqrDE/RnfAE family.</text>
</comment>
<reference key="1">
    <citation type="journal article" date="1999" name="Nat. Genet.">
        <title>Comparative genomes of Chlamydia pneumoniae and C. trachomatis.</title>
        <authorList>
            <person name="Kalman S."/>
            <person name="Mitchell W.P."/>
            <person name="Marathe R."/>
            <person name="Lammel C.J."/>
            <person name="Fan J."/>
            <person name="Hyman R.W."/>
            <person name="Olinger L."/>
            <person name="Grimwood J."/>
            <person name="Davis R.W."/>
            <person name="Stephens R.S."/>
        </authorList>
    </citation>
    <scope>NUCLEOTIDE SEQUENCE [LARGE SCALE GENOMIC DNA]</scope>
    <source>
        <strain>CWL029</strain>
    </source>
</reference>
<reference key="2">
    <citation type="journal article" date="2000" name="Nucleic Acids Res.">
        <title>Genome sequences of Chlamydia trachomatis MoPn and Chlamydia pneumoniae AR39.</title>
        <authorList>
            <person name="Read T.D."/>
            <person name="Brunham R.C."/>
            <person name="Shen C."/>
            <person name="Gill S.R."/>
            <person name="Heidelberg J.F."/>
            <person name="White O."/>
            <person name="Hickey E.K."/>
            <person name="Peterson J.D."/>
            <person name="Utterback T.R."/>
            <person name="Berry K.J."/>
            <person name="Bass S."/>
            <person name="Linher K.D."/>
            <person name="Weidman J.F."/>
            <person name="Khouri H.M."/>
            <person name="Craven B."/>
            <person name="Bowman C."/>
            <person name="Dodson R.J."/>
            <person name="Gwinn M.L."/>
            <person name="Nelson W.C."/>
            <person name="DeBoy R.T."/>
            <person name="Kolonay J.F."/>
            <person name="McClarty G."/>
            <person name="Salzberg S.L."/>
            <person name="Eisen J.A."/>
            <person name="Fraser C.M."/>
        </authorList>
    </citation>
    <scope>NUCLEOTIDE SEQUENCE [LARGE SCALE GENOMIC DNA]</scope>
    <source>
        <strain>AR39</strain>
    </source>
</reference>
<reference key="3">
    <citation type="journal article" date="2000" name="Nucleic Acids Res.">
        <title>Comparison of whole genome sequences of Chlamydia pneumoniae J138 from Japan and CWL029 from USA.</title>
        <authorList>
            <person name="Shirai M."/>
            <person name="Hirakawa H."/>
            <person name="Kimoto M."/>
            <person name="Tabuchi M."/>
            <person name="Kishi F."/>
            <person name="Ouchi K."/>
            <person name="Shiba T."/>
            <person name="Ishii K."/>
            <person name="Hattori M."/>
            <person name="Kuhara S."/>
            <person name="Nakazawa T."/>
        </authorList>
    </citation>
    <scope>NUCLEOTIDE SEQUENCE [LARGE SCALE GENOMIC DNA]</scope>
    <source>
        <strain>J138</strain>
    </source>
</reference>
<reference key="4">
    <citation type="submission" date="2002-05" db="EMBL/GenBank/DDBJ databases">
        <title>The genome sequence of Chlamydia pneumoniae TW183 and comparison with other Chlamydia strains based on whole genome sequence analysis.</title>
        <authorList>
            <person name="Geng M.M."/>
            <person name="Schuhmacher A."/>
            <person name="Muehldorfer I."/>
            <person name="Bensch K.W."/>
            <person name="Schaefer K.P."/>
            <person name="Schneider S."/>
            <person name="Pohl T."/>
            <person name="Essig A."/>
            <person name="Marre R."/>
            <person name="Melchers K."/>
        </authorList>
    </citation>
    <scope>NUCLEOTIDE SEQUENCE [LARGE SCALE GENOMIC DNA]</scope>
    <source>
        <strain>TW-183</strain>
    </source>
</reference>
<dbReference type="EC" id="7.2.1.1" evidence="1"/>
<dbReference type="EMBL" id="AE001363">
    <property type="protein sequence ID" value="AAD18573.1"/>
    <property type="molecule type" value="Genomic_DNA"/>
</dbReference>
<dbReference type="EMBL" id="AE002161">
    <property type="protein sequence ID" value="AAF38179.1"/>
    <property type="molecule type" value="Genomic_DNA"/>
</dbReference>
<dbReference type="EMBL" id="BA000008">
    <property type="protein sequence ID" value="BAA98637.1"/>
    <property type="molecule type" value="Genomic_DNA"/>
</dbReference>
<dbReference type="EMBL" id="AE009440">
    <property type="protein sequence ID" value="AAP98376.1"/>
    <property type="molecule type" value="Genomic_DNA"/>
</dbReference>
<dbReference type="PIR" id="C86544">
    <property type="entry name" value="C86544"/>
</dbReference>
<dbReference type="PIR" id="G72078">
    <property type="entry name" value="G72078"/>
</dbReference>
<dbReference type="RefSeq" id="NP_224629.1">
    <property type="nucleotide sequence ID" value="NC_000922.1"/>
</dbReference>
<dbReference type="RefSeq" id="WP_010883072.1">
    <property type="nucleotide sequence ID" value="NZ_LN847257.1"/>
</dbReference>
<dbReference type="SMR" id="Q9Z8B4"/>
<dbReference type="STRING" id="406984.CPK_ORF00941"/>
<dbReference type="GeneID" id="45050476"/>
<dbReference type="KEGG" id="cpa:CP_0324"/>
<dbReference type="KEGG" id="cpj:nqr4"/>
<dbReference type="KEGG" id="cpn:CPn_0429"/>
<dbReference type="KEGG" id="cpt:CpB0445"/>
<dbReference type="PATRIC" id="fig|115713.3.peg.476"/>
<dbReference type="eggNOG" id="COG1347">
    <property type="taxonomic scope" value="Bacteria"/>
</dbReference>
<dbReference type="HOGENOM" id="CLU_046659_1_1_0"/>
<dbReference type="OrthoDB" id="9790976at2"/>
<dbReference type="Proteomes" id="UP000000583">
    <property type="component" value="Chromosome"/>
</dbReference>
<dbReference type="Proteomes" id="UP000000801">
    <property type="component" value="Chromosome"/>
</dbReference>
<dbReference type="GO" id="GO:0005886">
    <property type="term" value="C:plasma membrane"/>
    <property type="evidence" value="ECO:0007669"/>
    <property type="project" value="UniProtKB-SubCell"/>
</dbReference>
<dbReference type="GO" id="GO:0016655">
    <property type="term" value="F:oxidoreductase activity, acting on NAD(P)H, quinone or similar compound as acceptor"/>
    <property type="evidence" value="ECO:0007669"/>
    <property type="project" value="UniProtKB-UniRule"/>
</dbReference>
<dbReference type="GO" id="GO:0006814">
    <property type="term" value="P:sodium ion transport"/>
    <property type="evidence" value="ECO:0007669"/>
    <property type="project" value="UniProtKB-UniRule"/>
</dbReference>
<dbReference type="HAMAP" id="MF_00428">
    <property type="entry name" value="NqrD"/>
    <property type="match status" value="1"/>
</dbReference>
<dbReference type="InterPro" id="IPR011292">
    <property type="entry name" value="NqrD"/>
</dbReference>
<dbReference type="InterPro" id="IPR003667">
    <property type="entry name" value="NqrDE/RnfAE"/>
</dbReference>
<dbReference type="NCBIfam" id="TIGR01939">
    <property type="entry name" value="nqrD"/>
    <property type="match status" value="1"/>
</dbReference>
<dbReference type="NCBIfam" id="NF006777">
    <property type="entry name" value="PRK09292.1"/>
    <property type="match status" value="1"/>
</dbReference>
<dbReference type="NCBIfam" id="NF009070">
    <property type="entry name" value="PRK12405.1"/>
    <property type="match status" value="1"/>
</dbReference>
<dbReference type="PANTHER" id="PTHR30586">
    <property type="entry name" value="ELECTRON TRANSPORT COMPLEX PROTEIN RNFE"/>
    <property type="match status" value="1"/>
</dbReference>
<dbReference type="PANTHER" id="PTHR30586:SF1">
    <property type="entry name" value="NA(+)-TRANSLOCATING NADH-QUINONE REDUCTASE SUBUNIT D"/>
    <property type="match status" value="1"/>
</dbReference>
<dbReference type="Pfam" id="PF02508">
    <property type="entry name" value="Rnf-Nqr"/>
    <property type="match status" value="1"/>
</dbReference>
<dbReference type="PIRSF" id="PIRSF006102">
    <property type="entry name" value="NQR_DE"/>
    <property type="match status" value="1"/>
</dbReference>